<dbReference type="EC" id="3.5.1.5" evidence="1"/>
<dbReference type="EMBL" id="CP001068">
    <property type="protein sequence ID" value="ACD27321.1"/>
    <property type="molecule type" value="Genomic_DNA"/>
</dbReference>
<dbReference type="SMR" id="B2U7N4"/>
<dbReference type="STRING" id="402626.Rpic_2187"/>
<dbReference type="KEGG" id="rpi:Rpic_2187"/>
<dbReference type="eggNOG" id="COG0831">
    <property type="taxonomic scope" value="Bacteria"/>
</dbReference>
<dbReference type="HOGENOM" id="CLU_145825_1_0_4"/>
<dbReference type="UniPathway" id="UPA00258">
    <property type="reaction ID" value="UER00370"/>
</dbReference>
<dbReference type="GO" id="GO:0005737">
    <property type="term" value="C:cytoplasm"/>
    <property type="evidence" value="ECO:0007669"/>
    <property type="project" value="UniProtKB-SubCell"/>
</dbReference>
<dbReference type="GO" id="GO:0016151">
    <property type="term" value="F:nickel cation binding"/>
    <property type="evidence" value="ECO:0007669"/>
    <property type="project" value="InterPro"/>
</dbReference>
<dbReference type="GO" id="GO:0009039">
    <property type="term" value="F:urease activity"/>
    <property type="evidence" value="ECO:0007669"/>
    <property type="project" value="UniProtKB-UniRule"/>
</dbReference>
<dbReference type="GO" id="GO:0043419">
    <property type="term" value="P:urea catabolic process"/>
    <property type="evidence" value="ECO:0007669"/>
    <property type="project" value="UniProtKB-UniRule"/>
</dbReference>
<dbReference type="CDD" id="cd00390">
    <property type="entry name" value="Urease_gamma"/>
    <property type="match status" value="1"/>
</dbReference>
<dbReference type="Gene3D" id="3.30.280.10">
    <property type="entry name" value="Urease, gamma-like subunit"/>
    <property type="match status" value="1"/>
</dbReference>
<dbReference type="HAMAP" id="MF_00739">
    <property type="entry name" value="Urease_gamma"/>
    <property type="match status" value="1"/>
</dbReference>
<dbReference type="InterPro" id="IPR012010">
    <property type="entry name" value="Urease_gamma"/>
</dbReference>
<dbReference type="InterPro" id="IPR002026">
    <property type="entry name" value="Urease_gamma/gamma-beta_su"/>
</dbReference>
<dbReference type="InterPro" id="IPR036463">
    <property type="entry name" value="Urease_gamma_sf"/>
</dbReference>
<dbReference type="InterPro" id="IPR050069">
    <property type="entry name" value="Urease_subunit"/>
</dbReference>
<dbReference type="NCBIfam" id="NF009712">
    <property type="entry name" value="PRK13241.1"/>
    <property type="match status" value="1"/>
</dbReference>
<dbReference type="NCBIfam" id="TIGR00193">
    <property type="entry name" value="urease_gam"/>
    <property type="match status" value="1"/>
</dbReference>
<dbReference type="PANTHER" id="PTHR33569">
    <property type="entry name" value="UREASE"/>
    <property type="match status" value="1"/>
</dbReference>
<dbReference type="PANTHER" id="PTHR33569:SF1">
    <property type="entry name" value="UREASE"/>
    <property type="match status" value="1"/>
</dbReference>
<dbReference type="Pfam" id="PF00547">
    <property type="entry name" value="Urease_gamma"/>
    <property type="match status" value="1"/>
</dbReference>
<dbReference type="PIRSF" id="PIRSF001223">
    <property type="entry name" value="Urease_gamma"/>
    <property type="match status" value="1"/>
</dbReference>
<dbReference type="SUPFAM" id="SSF54111">
    <property type="entry name" value="Urease, gamma-subunit"/>
    <property type="match status" value="1"/>
</dbReference>
<name>URE3_RALPJ</name>
<keyword id="KW-0963">Cytoplasm</keyword>
<keyword id="KW-0378">Hydrolase</keyword>
<accession>B2U7N4</accession>
<gene>
    <name evidence="1" type="primary">ureA</name>
    <name type="ordered locus">Rpic_2187</name>
</gene>
<protein>
    <recommendedName>
        <fullName evidence="1">Urease subunit gamma</fullName>
        <ecNumber evidence="1">3.5.1.5</ecNumber>
    </recommendedName>
    <alternativeName>
        <fullName evidence="1">Urea amidohydrolase subunit gamma</fullName>
    </alternativeName>
</protein>
<organism>
    <name type="scientific">Ralstonia pickettii (strain 12J)</name>
    <dbReference type="NCBI Taxonomy" id="402626"/>
    <lineage>
        <taxon>Bacteria</taxon>
        <taxon>Pseudomonadati</taxon>
        <taxon>Pseudomonadota</taxon>
        <taxon>Betaproteobacteria</taxon>
        <taxon>Burkholderiales</taxon>
        <taxon>Burkholderiaceae</taxon>
        <taxon>Ralstonia</taxon>
    </lineage>
</organism>
<evidence type="ECO:0000255" key="1">
    <source>
        <dbReference type="HAMAP-Rule" id="MF_00739"/>
    </source>
</evidence>
<reference key="1">
    <citation type="submission" date="2008-05" db="EMBL/GenBank/DDBJ databases">
        <title>Complete sequence of chromosome 1 of Ralstonia pickettii 12J.</title>
        <authorList>
            <person name="Lucas S."/>
            <person name="Copeland A."/>
            <person name="Lapidus A."/>
            <person name="Glavina del Rio T."/>
            <person name="Dalin E."/>
            <person name="Tice H."/>
            <person name="Bruce D."/>
            <person name="Goodwin L."/>
            <person name="Pitluck S."/>
            <person name="Meincke L."/>
            <person name="Brettin T."/>
            <person name="Detter J.C."/>
            <person name="Han C."/>
            <person name="Kuske C.R."/>
            <person name="Schmutz J."/>
            <person name="Larimer F."/>
            <person name="Land M."/>
            <person name="Hauser L."/>
            <person name="Kyrpides N."/>
            <person name="Mikhailova N."/>
            <person name="Marsh T."/>
            <person name="Richardson P."/>
        </authorList>
    </citation>
    <scope>NUCLEOTIDE SEQUENCE [LARGE SCALE GENOMIC DNA]</scope>
    <source>
        <strain>12J</strain>
    </source>
</reference>
<sequence length="100" mass="11006">MELTPREKDKLLIFTAALLAERRKGRGLKLNYPEAVAFISAAIMEGARDGKTVADLMHYGTTLLTRNDVMDGVAEMIPDIQVEATFPDGTKLVTVHHPIV</sequence>
<comment type="catalytic activity">
    <reaction evidence="1">
        <text>urea + 2 H2O + H(+) = hydrogencarbonate + 2 NH4(+)</text>
        <dbReference type="Rhea" id="RHEA:20557"/>
        <dbReference type="ChEBI" id="CHEBI:15377"/>
        <dbReference type="ChEBI" id="CHEBI:15378"/>
        <dbReference type="ChEBI" id="CHEBI:16199"/>
        <dbReference type="ChEBI" id="CHEBI:17544"/>
        <dbReference type="ChEBI" id="CHEBI:28938"/>
        <dbReference type="EC" id="3.5.1.5"/>
    </reaction>
</comment>
<comment type="pathway">
    <text evidence="1">Nitrogen metabolism; urea degradation; CO(2) and NH(3) from urea (urease route): step 1/1.</text>
</comment>
<comment type="subunit">
    <text evidence="1">Heterotrimer of UreA (gamma), UreB (beta) and UreC (alpha) subunits. Three heterotrimers associate to form the active enzyme.</text>
</comment>
<comment type="subcellular location">
    <subcellularLocation>
        <location evidence="1">Cytoplasm</location>
    </subcellularLocation>
</comment>
<comment type="similarity">
    <text evidence="1">Belongs to the urease gamma subunit family.</text>
</comment>
<feature type="chain" id="PRO_1000199877" description="Urease subunit gamma">
    <location>
        <begin position="1"/>
        <end position="100"/>
    </location>
</feature>
<proteinExistence type="inferred from homology"/>